<reference key="1">
    <citation type="journal article" date="2004" name="Nat. Biotechnol.">
        <title>The genome sequence of the extreme thermophile Thermus thermophilus.</title>
        <authorList>
            <person name="Henne A."/>
            <person name="Brueggemann H."/>
            <person name="Raasch C."/>
            <person name="Wiezer A."/>
            <person name="Hartsch T."/>
            <person name="Liesegang H."/>
            <person name="Johann A."/>
            <person name="Lienard T."/>
            <person name="Gohl O."/>
            <person name="Martinez-Arias R."/>
            <person name="Jacobi C."/>
            <person name="Starkuviene V."/>
            <person name="Schlenczeck S."/>
            <person name="Dencker S."/>
            <person name="Huber R."/>
            <person name="Klenk H.-P."/>
            <person name="Kramer W."/>
            <person name="Merkl R."/>
            <person name="Gottschalk G."/>
            <person name="Fritz H.-J."/>
        </authorList>
    </citation>
    <scope>NUCLEOTIDE SEQUENCE [LARGE SCALE GENOMIC DNA]</scope>
    <source>
        <strain>ATCC BAA-163 / DSM 7039 / HB27</strain>
    </source>
</reference>
<feature type="chain" id="PRO_0000159935" description="3-dehydroquinate dehydratase">
    <location>
        <begin position="1"/>
        <end position="149"/>
    </location>
</feature>
<feature type="active site" description="Proton acceptor" evidence="1">
    <location>
        <position position="21"/>
    </location>
</feature>
<feature type="active site" description="Proton donor" evidence="1">
    <location>
        <position position="99"/>
    </location>
</feature>
<feature type="binding site" evidence="1">
    <location>
        <position position="73"/>
    </location>
    <ligand>
        <name>substrate</name>
    </ligand>
</feature>
<feature type="binding site" evidence="1">
    <location>
        <position position="79"/>
    </location>
    <ligand>
        <name>substrate</name>
    </ligand>
</feature>
<feature type="binding site" evidence="1">
    <location>
        <position position="86"/>
    </location>
    <ligand>
        <name>substrate</name>
    </ligand>
</feature>
<feature type="binding site" evidence="1">
    <location>
        <begin position="100"/>
        <end position="101"/>
    </location>
    <ligand>
        <name>substrate</name>
    </ligand>
</feature>
<feature type="binding site" evidence="1">
    <location>
        <position position="110"/>
    </location>
    <ligand>
        <name>substrate</name>
    </ligand>
</feature>
<feature type="site" description="Transition state stabilizer" evidence="1">
    <location>
        <position position="16"/>
    </location>
</feature>
<dbReference type="EC" id="4.2.1.10" evidence="1"/>
<dbReference type="EMBL" id="AE017221">
    <property type="protein sequence ID" value="AAS81331.1"/>
    <property type="molecule type" value="Genomic_DNA"/>
</dbReference>
<dbReference type="RefSeq" id="WP_011173409.1">
    <property type="nucleotide sequence ID" value="NC_005835.1"/>
</dbReference>
<dbReference type="SMR" id="Q72IZ2"/>
<dbReference type="GeneID" id="3169111"/>
<dbReference type="KEGG" id="tth:TT_C0989"/>
<dbReference type="eggNOG" id="COG0757">
    <property type="taxonomic scope" value="Bacteria"/>
</dbReference>
<dbReference type="HOGENOM" id="CLU_090968_3_0_0"/>
<dbReference type="OrthoDB" id="9790793at2"/>
<dbReference type="UniPathway" id="UPA00053">
    <property type="reaction ID" value="UER00086"/>
</dbReference>
<dbReference type="Proteomes" id="UP000000592">
    <property type="component" value="Chromosome"/>
</dbReference>
<dbReference type="GO" id="GO:0003855">
    <property type="term" value="F:3-dehydroquinate dehydratase activity"/>
    <property type="evidence" value="ECO:0007669"/>
    <property type="project" value="UniProtKB-UniRule"/>
</dbReference>
<dbReference type="GO" id="GO:0008652">
    <property type="term" value="P:amino acid biosynthetic process"/>
    <property type="evidence" value="ECO:0007669"/>
    <property type="project" value="UniProtKB-KW"/>
</dbReference>
<dbReference type="GO" id="GO:0009073">
    <property type="term" value="P:aromatic amino acid family biosynthetic process"/>
    <property type="evidence" value="ECO:0007669"/>
    <property type="project" value="UniProtKB-KW"/>
</dbReference>
<dbReference type="GO" id="GO:0009423">
    <property type="term" value="P:chorismate biosynthetic process"/>
    <property type="evidence" value="ECO:0007669"/>
    <property type="project" value="UniProtKB-UniRule"/>
</dbReference>
<dbReference type="GO" id="GO:0019631">
    <property type="term" value="P:quinate catabolic process"/>
    <property type="evidence" value="ECO:0007669"/>
    <property type="project" value="TreeGrafter"/>
</dbReference>
<dbReference type="CDD" id="cd00466">
    <property type="entry name" value="DHQase_II"/>
    <property type="match status" value="1"/>
</dbReference>
<dbReference type="Gene3D" id="3.40.50.9100">
    <property type="entry name" value="Dehydroquinase, class II"/>
    <property type="match status" value="1"/>
</dbReference>
<dbReference type="HAMAP" id="MF_00169">
    <property type="entry name" value="AroQ"/>
    <property type="match status" value="1"/>
</dbReference>
<dbReference type="InterPro" id="IPR001874">
    <property type="entry name" value="DHquinase_II"/>
</dbReference>
<dbReference type="InterPro" id="IPR018509">
    <property type="entry name" value="DHquinase_II_CS"/>
</dbReference>
<dbReference type="InterPro" id="IPR036441">
    <property type="entry name" value="DHquinase_II_sf"/>
</dbReference>
<dbReference type="NCBIfam" id="TIGR01088">
    <property type="entry name" value="aroQ"/>
    <property type="match status" value="1"/>
</dbReference>
<dbReference type="NCBIfam" id="NF003805">
    <property type="entry name" value="PRK05395.1-2"/>
    <property type="match status" value="1"/>
</dbReference>
<dbReference type="NCBIfam" id="NF003806">
    <property type="entry name" value="PRK05395.1-3"/>
    <property type="match status" value="1"/>
</dbReference>
<dbReference type="NCBIfam" id="NF003807">
    <property type="entry name" value="PRK05395.1-4"/>
    <property type="match status" value="1"/>
</dbReference>
<dbReference type="PANTHER" id="PTHR21272">
    <property type="entry name" value="CATABOLIC 3-DEHYDROQUINASE"/>
    <property type="match status" value="1"/>
</dbReference>
<dbReference type="PANTHER" id="PTHR21272:SF3">
    <property type="entry name" value="CATABOLIC 3-DEHYDROQUINASE"/>
    <property type="match status" value="1"/>
</dbReference>
<dbReference type="Pfam" id="PF01220">
    <property type="entry name" value="DHquinase_II"/>
    <property type="match status" value="1"/>
</dbReference>
<dbReference type="PIRSF" id="PIRSF001399">
    <property type="entry name" value="DHquinase_II"/>
    <property type="match status" value="1"/>
</dbReference>
<dbReference type="SUPFAM" id="SSF52304">
    <property type="entry name" value="Type II 3-dehydroquinate dehydratase"/>
    <property type="match status" value="1"/>
</dbReference>
<dbReference type="PROSITE" id="PS01029">
    <property type="entry name" value="DEHYDROQUINASE_II"/>
    <property type="match status" value="1"/>
</dbReference>
<proteinExistence type="inferred from homology"/>
<keyword id="KW-0028">Amino-acid biosynthesis</keyword>
<keyword id="KW-0057">Aromatic amino acid biosynthesis</keyword>
<keyword id="KW-0456">Lyase</keyword>
<sequence>MVLILNGPNLNLLGRREPEVYGRTTLEELEALCEAWGAELGLGVVFRQTNYEGQLIEWVQQAHQEGFLAIVLNPGALTHYSYALLDAIRAQPLPVVEVHLTNLHAREEFRRHSVTAPACRGIVSGFGPLSYKLALVYLAETLEVGGEGF</sequence>
<comment type="function">
    <text evidence="1">Catalyzes a trans-dehydration via an enolate intermediate.</text>
</comment>
<comment type="catalytic activity">
    <reaction evidence="1">
        <text>3-dehydroquinate = 3-dehydroshikimate + H2O</text>
        <dbReference type="Rhea" id="RHEA:21096"/>
        <dbReference type="ChEBI" id="CHEBI:15377"/>
        <dbReference type="ChEBI" id="CHEBI:16630"/>
        <dbReference type="ChEBI" id="CHEBI:32364"/>
        <dbReference type="EC" id="4.2.1.10"/>
    </reaction>
</comment>
<comment type="pathway">
    <text evidence="1">Metabolic intermediate biosynthesis; chorismate biosynthesis; chorismate from D-erythrose 4-phosphate and phosphoenolpyruvate: step 3/7.</text>
</comment>
<comment type="subunit">
    <text evidence="1">Homododecamer.</text>
</comment>
<comment type="similarity">
    <text evidence="1">Belongs to the type-II 3-dehydroquinase family.</text>
</comment>
<protein>
    <recommendedName>
        <fullName evidence="1">3-dehydroquinate dehydratase</fullName>
        <shortName evidence="1">3-dehydroquinase</shortName>
        <ecNumber evidence="1">4.2.1.10</ecNumber>
    </recommendedName>
    <alternativeName>
        <fullName evidence="1">Type II DHQase</fullName>
    </alternativeName>
</protein>
<name>AROQ_THET2</name>
<evidence type="ECO:0000255" key="1">
    <source>
        <dbReference type="HAMAP-Rule" id="MF_00169"/>
    </source>
</evidence>
<gene>
    <name evidence="1" type="primary">aroQ</name>
    <name type="ordered locus">TT_C0989</name>
</gene>
<accession>Q72IZ2</accession>
<organism>
    <name type="scientific">Thermus thermophilus (strain ATCC BAA-163 / DSM 7039 / HB27)</name>
    <dbReference type="NCBI Taxonomy" id="262724"/>
    <lineage>
        <taxon>Bacteria</taxon>
        <taxon>Thermotogati</taxon>
        <taxon>Deinococcota</taxon>
        <taxon>Deinococci</taxon>
        <taxon>Thermales</taxon>
        <taxon>Thermaceae</taxon>
        <taxon>Thermus</taxon>
    </lineage>
</organism>